<dbReference type="EMBL" id="CP000058">
    <property type="protein sequence ID" value="AAZ36274.1"/>
    <property type="molecule type" value="Genomic_DNA"/>
</dbReference>
<dbReference type="RefSeq" id="WP_011169942.1">
    <property type="nucleotide sequence ID" value="NC_005773.3"/>
</dbReference>
<dbReference type="SMR" id="Q48BF2"/>
<dbReference type="KEGG" id="psp:PSPPH_5220"/>
<dbReference type="eggNOG" id="COG0706">
    <property type="taxonomic scope" value="Bacteria"/>
</dbReference>
<dbReference type="HOGENOM" id="CLU_016535_3_0_6"/>
<dbReference type="Proteomes" id="UP000000551">
    <property type="component" value="Chromosome"/>
</dbReference>
<dbReference type="GO" id="GO:0005886">
    <property type="term" value="C:plasma membrane"/>
    <property type="evidence" value="ECO:0007669"/>
    <property type="project" value="UniProtKB-SubCell"/>
</dbReference>
<dbReference type="GO" id="GO:0032977">
    <property type="term" value="F:membrane insertase activity"/>
    <property type="evidence" value="ECO:0007669"/>
    <property type="project" value="InterPro"/>
</dbReference>
<dbReference type="GO" id="GO:0051205">
    <property type="term" value="P:protein insertion into membrane"/>
    <property type="evidence" value="ECO:0007669"/>
    <property type="project" value="TreeGrafter"/>
</dbReference>
<dbReference type="GO" id="GO:0015031">
    <property type="term" value="P:protein transport"/>
    <property type="evidence" value="ECO:0007669"/>
    <property type="project" value="UniProtKB-KW"/>
</dbReference>
<dbReference type="CDD" id="cd20070">
    <property type="entry name" value="5TM_YidC_Alb3"/>
    <property type="match status" value="1"/>
</dbReference>
<dbReference type="CDD" id="cd19961">
    <property type="entry name" value="EcYidC-like_peri"/>
    <property type="match status" value="1"/>
</dbReference>
<dbReference type="Gene3D" id="2.70.98.90">
    <property type="match status" value="1"/>
</dbReference>
<dbReference type="HAMAP" id="MF_01810">
    <property type="entry name" value="YidC_type1"/>
    <property type="match status" value="1"/>
</dbReference>
<dbReference type="InterPro" id="IPR019998">
    <property type="entry name" value="Membr_insert_YidC"/>
</dbReference>
<dbReference type="InterPro" id="IPR028053">
    <property type="entry name" value="Membr_insert_YidC_N"/>
</dbReference>
<dbReference type="InterPro" id="IPR001708">
    <property type="entry name" value="YidC/ALB3/OXA1/COX18"/>
</dbReference>
<dbReference type="InterPro" id="IPR028055">
    <property type="entry name" value="YidC/Oxa/ALB_C"/>
</dbReference>
<dbReference type="InterPro" id="IPR047196">
    <property type="entry name" value="YidC_ALB_C"/>
</dbReference>
<dbReference type="InterPro" id="IPR038221">
    <property type="entry name" value="YidC_periplasmic_sf"/>
</dbReference>
<dbReference type="NCBIfam" id="NF002352">
    <property type="entry name" value="PRK01318.1-3"/>
    <property type="match status" value="1"/>
</dbReference>
<dbReference type="NCBIfam" id="TIGR03593">
    <property type="entry name" value="yidC_nterm"/>
    <property type="match status" value="1"/>
</dbReference>
<dbReference type="NCBIfam" id="TIGR03592">
    <property type="entry name" value="yidC_oxa1_cterm"/>
    <property type="match status" value="1"/>
</dbReference>
<dbReference type="PANTHER" id="PTHR12428:SF65">
    <property type="entry name" value="CYTOCHROME C OXIDASE ASSEMBLY PROTEIN COX18, MITOCHONDRIAL"/>
    <property type="match status" value="1"/>
</dbReference>
<dbReference type="PANTHER" id="PTHR12428">
    <property type="entry name" value="OXA1"/>
    <property type="match status" value="1"/>
</dbReference>
<dbReference type="Pfam" id="PF02096">
    <property type="entry name" value="60KD_IMP"/>
    <property type="match status" value="1"/>
</dbReference>
<dbReference type="Pfam" id="PF14849">
    <property type="entry name" value="YidC_periplas"/>
    <property type="match status" value="1"/>
</dbReference>
<dbReference type="PRINTS" id="PR00701">
    <property type="entry name" value="60KDINNERMP"/>
</dbReference>
<dbReference type="PRINTS" id="PR01900">
    <property type="entry name" value="YIDCPROTEIN"/>
</dbReference>
<proteinExistence type="inferred from homology"/>
<gene>
    <name evidence="1" type="primary">yidC</name>
    <name type="ordered locus">PSPPH_5220</name>
</gene>
<organism>
    <name type="scientific">Pseudomonas savastanoi pv. phaseolicola (strain 1448A / Race 6)</name>
    <name type="common">Pseudomonas syringae pv. phaseolicola (strain 1448A / Race 6)</name>
    <dbReference type="NCBI Taxonomy" id="264730"/>
    <lineage>
        <taxon>Bacteria</taxon>
        <taxon>Pseudomonadati</taxon>
        <taxon>Pseudomonadota</taxon>
        <taxon>Gammaproteobacteria</taxon>
        <taxon>Pseudomonadales</taxon>
        <taxon>Pseudomonadaceae</taxon>
        <taxon>Pseudomonas</taxon>
    </lineage>
</organism>
<accession>Q48BF2</accession>
<keyword id="KW-0997">Cell inner membrane</keyword>
<keyword id="KW-1003">Cell membrane</keyword>
<keyword id="KW-0143">Chaperone</keyword>
<keyword id="KW-0472">Membrane</keyword>
<keyword id="KW-0653">Protein transport</keyword>
<keyword id="KW-0812">Transmembrane</keyword>
<keyword id="KW-1133">Transmembrane helix</keyword>
<keyword id="KW-0813">Transport</keyword>
<reference key="1">
    <citation type="journal article" date="2005" name="J. Bacteriol.">
        <title>Whole-genome sequence analysis of Pseudomonas syringae pv. phaseolicola 1448A reveals divergence among pathovars in genes involved in virulence and transposition.</title>
        <authorList>
            <person name="Joardar V."/>
            <person name="Lindeberg M."/>
            <person name="Jackson R.W."/>
            <person name="Selengut J."/>
            <person name="Dodson R."/>
            <person name="Brinkac L.M."/>
            <person name="Daugherty S.C."/>
            <person name="DeBoy R.T."/>
            <person name="Durkin A.S."/>
            <person name="Gwinn Giglio M."/>
            <person name="Madupu R."/>
            <person name="Nelson W.C."/>
            <person name="Rosovitz M.J."/>
            <person name="Sullivan S.A."/>
            <person name="Crabtree J."/>
            <person name="Creasy T."/>
            <person name="Davidsen T.M."/>
            <person name="Haft D.H."/>
            <person name="Zafar N."/>
            <person name="Zhou L."/>
            <person name="Halpin R."/>
            <person name="Holley T."/>
            <person name="Khouri H.M."/>
            <person name="Feldblyum T.V."/>
            <person name="White O."/>
            <person name="Fraser C.M."/>
            <person name="Chatterjee A.K."/>
            <person name="Cartinhour S."/>
            <person name="Schneider D."/>
            <person name="Mansfield J.W."/>
            <person name="Collmer A."/>
            <person name="Buell R."/>
        </authorList>
    </citation>
    <scope>NUCLEOTIDE SEQUENCE [LARGE SCALE GENOMIC DNA]</scope>
    <source>
        <strain>1448A / Race 6</strain>
    </source>
</reference>
<protein>
    <recommendedName>
        <fullName evidence="1">Membrane protein insertase YidC</fullName>
    </recommendedName>
    <alternativeName>
        <fullName evidence="1">Foldase YidC</fullName>
    </alternativeName>
    <alternativeName>
        <fullName evidence="1">Membrane integrase YidC</fullName>
    </alternativeName>
    <alternativeName>
        <fullName evidence="1">Membrane protein YidC</fullName>
    </alternativeName>
</protein>
<sequence length="563" mass="61869">MDIKRTILIVALAIVTYVGVLKWNQDYGQAAMPTQNVAASTTAPGIPDTAAGTNGSASADVPSASATANTAAAPLETPAVASKDLIHVKTDVLDLAIDPVGGDVVQLRLPLYPRRQDRPDVPFQLFDNGGERTFLAQSGLTGTNGPDARAAGRPVYTSTQKTYQLADGQDTMVVDLKFSENGVNYIKRFTFKRGLYDLVMTYVVDNQSAQPWAGNLFAQLKRDASSDPSSTTATGTATYLGAALWTAAEPYKKVSMKDIDKGQIKETVQGGWVAWLQHYFVTAWIPDHNATNAVQTRKDSQGNYIIGFTSPTLSVAPGAQGETSATLYAGPKSQAVLKELSPGLELTVDYGFLWFIAQPIFWLLQHIHAILGNWGWSIIVLTMLIKGLFFPLSAASYKSMARMRAVAPKLALLKEQHGDDRQKMSQAMMELYKKEKINPLGGCLPILVQMPVFLSLYWVLLESVEMRQAPWILWITDLSIKDPFFILPIIMGATMFIQQRLNPTPPDPMQAKVMKMMPIIFTFFFLWFPAGLVLYWVVNNTLSIAQQAYITRKIEAATKKAAA</sequence>
<name>YIDC_PSE14</name>
<comment type="function">
    <text evidence="1">Required for the insertion and/or proper folding and/or complex formation of integral membrane proteins into the membrane. Involved in integration of membrane proteins that insert both dependently and independently of the Sec translocase complex, as well as at least some lipoproteins. Aids folding of multispanning membrane proteins.</text>
</comment>
<comment type="subunit">
    <text evidence="1">Interacts with the Sec translocase complex via SecD. Specifically interacts with transmembrane segments of nascent integral membrane proteins during membrane integration.</text>
</comment>
<comment type="subcellular location">
    <subcellularLocation>
        <location evidence="1">Cell inner membrane</location>
        <topology evidence="1">Multi-pass membrane protein</topology>
    </subcellularLocation>
</comment>
<comment type="similarity">
    <text evidence="1">Belongs to the OXA1/ALB3/YidC family. Type 1 subfamily.</text>
</comment>
<feature type="chain" id="PRO_1000070135" description="Membrane protein insertase YidC">
    <location>
        <begin position="1"/>
        <end position="563"/>
    </location>
</feature>
<feature type="transmembrane region" description="Helical" evidence="1">
    <location>
        <begin position="1"/>
        <end position="21"/>
    </location>
</feature>
<feature type="transmembrane region" description="Helical" evidence="1">
    <location>
        <begin position="344"/>
        <end position="364"/>
    </location>
</feature>
<feature type="transmembrane region" description="Helical" evidence="1">
    <location>
        <begin position="370"/>
        <end position="390"/>
    </location>
</feature>
<feature type="transmembrane region" description="Helical" evidence="1">
    <location>
        <begin position="440"/>
        <end position="460"/>
    </location>
</feature>
<feature type="transmembrane region" description="Helical" evidence="1">
    <location>
        <begin position="471"/>
        <end position="491"/>
    </location>
</feature>
<feature type="transmembrane region" description="Helical" evidence="1">
    <location>
        <begin position="518"/>
        <end position="538"/>
    </location>
</feature>
<feature type="region of interest" description="Disordered" evidence="2">
    <location>
        <begin position="43"/>
        <end position="62"/>
    </location>
</feature>
<evidence type="ECO:0000255" key="1">
    <source>
        <dbReference type="HAMAP-Rule" id="MF_01810"/>
    </source>
</evidence>
<evidence type="ECO:0000256" key="2">
    <source>
        <dbReference type="SAM" id="MobiDB-lite"/>
    </source>
</evidence>